<organism>
    <name type="scientific">Dictyostelium discoideum</name>
    <name type="common">Social amoeba</name>
    <dbReference type="NCBI Taxonomy" id="44689"/>
    <lineage>
        <taxon>Eukaryota</taxon>
        <taxon>Amoebozoa</taxon>
        <taxon>Evosea</taxon>
        <taxon>Eumycetozoa</taxon>
        <taxon>Dictyostelia</taxon>
        <taxon>Dictyosteliales</taxon>
        <taxon>Dictyosteliaceae</taxon>
        <taxon>Dictyostelium</taxon>
    </lineage>
</organism>
<sequence length="72" mass="7775">MSIFSSLSSLSTGSLKSSVSSIENGSSSGSFGSNETSGWGQHHWNSCHPCPPPRPICRPCPPCRPEPRCHRY</sequence>
<gene>
    <name type="ORF">DDB_G0285569</name>
</gene>
<proteinExistence type="predicted"/>
<feature type="chain" id="PRO_0000350809" description="Putative uncharacterized protein DDB_G0285569">
    <location>
        <begin position="1"/>
        <end position="72"/>
    </location>
</feature>
<feature type="region of interest" description="Disordered" evidence="1">
    <location>
        <begin position="1"/>
        <end position="42"/>
    </location>
</feature>
<feature type="compositionally biased region" description="Low complexity" evidence="1">
    <location>
        <begin position="1"/>
        <end position="38"/>
    </location>
</feature>
<name>Y6576_DICDI</name>
<dbReference type="EMBL" id="AAFI02000079">
    <property type="protein sequence ID" value="EAL64622.1"/>
    <property type="molecule type" value="Genomic_DNA"/>
</dbReference>
<dbReference type="RefSeq" id="XP_638131.1">
    <property type="nucleotide sequence ID" value="XM_633039.1"/>
</dbReference>
<dbReference type="PaxDb" id="44689-DDB0186576"/>
<dbReference type="EnsemblProtists" id="EAL64622">
    <property type="protein sequence ID" value="EAL64622"/>
    <property type="gene ID" value="DDB_G0285569"/>
</dbReference>
<dbReference type="GeneID" id="8625180"/>
<dbReference type="KEGG" id="ddi:DDB_G0285569"/>
<dbReference type="dictyBase" id="DDB_G0285569"/>
<dbReference type="HOGENOM" id="CLU_2745368_0_0_1"/>
<dbReference type="InParanoid" id="Q54N12"/>
<dbReference type="PRO" id="PR:Q54N12"/>
<dbReference type="Proteomes" id="UP000002195">
    <property type="component" value="Chromosome 4"/>
</dbReference>
<keyword id="KW-1185">Reference proteome</keyword>
<accession>Q54N12</accession>
<reference key="1">
    <citation type="journal article" date="2005" name="Nature">
        <title>The genome of the social amoeba Dictyostelium discoideum.</title>
        <authorList>
            <person name="Eichinger L."/>
            <person name="Pachebat J.A."/>
            <person name="Gloeckner G."/>
            <person name="Rajandream M.A."/>
            <person name="Sucgang R."/>
            <person name="Berriman M."/>
            <person name="Song J."/>
            <person name="Olsen R."/>
            <person name="Szafranski K."/>
            <person name="Xu Q."/>
            <person name="Tunggal B."/>
            <person name="Kummerfeld S."/>
            <person name="Madera M."/>
            <person name="Konfortov B.A."/>
            <person name="Rivero F."/>
            <person name="Bankier A.T."/>
            <person name="Lehmann R."/>
            <person name="Hamlin N."/>
            <person name="Davies R."/>
            <person name="Gaudet P."/>
            <person name="Fey P."/>
            <person name="Pilcher K."/>
            <person name="Chen G."/>
            <person name="Saunders D."/>
            <person name="Sodergren E.J."/>
            <person name="Davis P."/>
            <person name="Kerhornou A."/>
            <person name="Nie X."/>
            <person name="Hall N."/>
            <person name="Anjard C."/>
            <person name="Hemphill L."/>
            <person name="Bason N."/>
            <person name="Farbrother P."/>
            <person name="Desany B."/>
            <person name="Just E."/>
            <person name="Morio T."/>
            <person name="Rost R."/>
            <person name="Churcher C.M."/>
            <person name="Cooper J."/>
            <person name="Haydock S."/>
            <person name="van Driessche N."/>
            <person name="Cronin A."/>
            <person name="Goodhead I."/>
            <person name="Muzny D.M."/>
            <person name="Mourier T."/>
            <person name="Pain A."/>
            <person name="Lu M."/>
            <person name="Harper D."/>
            <person name="Lindsay R."/>
            <person name="Hauser H."/>
            <person name="James K.D."/>
            <person name="Quiles M."/>
            <person name="Madan Babu M."/>
            <person name="Saito T."/>
            <person name="Buchrieser C."/>
            <person name="Wardroper A."/>
            <person name="Felder M."/>
            <person name="Thangavelu M."/>
            <person name="Johnson D."/>
            <person name="Knights A."/>
            <person name="Loulseged H."/>
            <person name="Mungall K.L."/>
            <person name="Oliver K."/>
            <person name="Price C."/>
            <person name="Quail M.A."/>
            <person name="Urushihara H."/>
            <person name="Hernandez J."/>
            <person name="Rabbinowitsch E."/>
            <person name="Steffen D."/>
            <person name="Sanders M."/>
            <person name="Ma J."/>
            <person name="Kohara Y."/>
            <person name="Sharp S."/>
            <person name="Simmonds M.N."/>
            <person name="Spiegler S."/>
            <person name="Tivey A."/>
            <person name="Sugano S."/>
            <person name="White B."/>
            <person name="Walker D."/>
            <person name="Woodward J.R."/>
            <person name="Winckler T."/>
            <person name="Tanaka Y."/>
            <person name="Shaulsky G."/>
            <person name="Schleicher M."/>
            <person name="Weinstock G.M."/>
            <person name="Rosenthal A."/>
            <person name="Cox E.C."/>
            <person name="Chisholm R.L."/>
            <person name="Gibbs R.A."/>
            <person name="Loomis W.F."/>
            <person name="Platzer M."/>
            <person name="Kay R.R."/>
            <person name="Williams J.G."/>
            <person name="Dear P.H."/>
            <person name="Noegel A.A."/>
            <person name="Barrell B.G."/>
            <person name="Kuspa A."/>
        </authorList>
    </citation>
    <scope>NUCLEOTIDE SEQUENCE [LARGE SCALE GENOMIC DNA]</scope>
    <source>
        <strain>AX4</strain>
    </source>
</reference>
<evidence type="ECO:0000256" key="1">
    <source>
        <dbReference type="SAM" id="MobiDB-lite"/>
    </source>
</evidence>
<protein>
    <recommendedName>
        <fullName>Putative uncharacterized protein DDB_G0285569</fullName>
    </recommendedName>
</protein>